<reference key="1">
    <citation type="journal article" date="2005" name="Nature">
        <title>The genome of the social amoeba Dictyostelium discoideum.</title>
        <authorList>
            <person name="Eichinger L."/>
            <person name="Pachebat J.A."/>
            <person name="Gloeckner G."/>
            <person name="Rajandream M.A."/>
            <person name="Sucgang R."/>
            <person name="Berriman M."/>
            <person name="Song J."/>
            <person name="Olsen R."/>
            <person name="Szafranski K."/>
            <person name="Xu Q."/>
            <person name="Tunggal B."/>
            <person name="Kummerfeld S."/>
            <person name="Madera M."/>
            <person name="Konfortov B.A."/>
            <person name="Rivero F."/>
            <person name="Bankier A.T."/>
            <person name="Lehmann R."/>
            <person name="Hamlin N."/>
            <person name="Davies R."/>
            <person name="Gaudet P."/>
            <person name="Fey P."/>
            <person name="Pilcher K."/>
            <person name="Chen G."/>
            <person name="Saunders D."/>
            <person name="Sodergren E.J."/>
            <person name="Davis P."/>
            <person name="Kerhornou A."/>
            <person name="Nie X."/>
            <person name="Hall N."/>
            <person name="Anjard C."/>
            <person name="Hemphill L."/>
            <person name="Bason N."/>
            <person name="Farbrother P."/>
            <person name="Desany B."/>
            <person name="Just E."/>
            <person name="Morio T."/>
            <person name="Rost R."/>
            <person name="Churcher C.M."/>
            <person name="Cooper J."/>
            <person name="Haydock S."/>
            <person name="van Driessche N."/>
            <person name="Cronin A."/>
            <person name="Goodhead I."/>
            <person name="Muzny D.M."/>
            <person name="Mourier T."/>
            <person name="Pain A."/>
            <person name="Lu M."/>
            <person name="Harper D."/>
            <person name="Lindsay R."/>
            <person name="Hauser H."/>
            <person name="James K.D."/>
            <person name="Quiles M."/>
            <person name="Madan Babu M."/>
            <person name="Saito T."/>
            <person name="Buchrieser C."/>
            <person name="Wardroper A."/>
            <person name="Felder M."/>
            <person name="Thangavelu M."/>
            <person name="Johnson D."/>
            <person name="Knights A."/>
            <person name="Loulseged H."/>
            <person name="Mungall K.L."/>
            <person name="Oliver K."/>
            <person name="Price C."/>
            <person name="Quail M.A."/>
            <person name="Urushihara H."/>
            <person name="Hernandez J."/>
            <person name="Rabbinowitsch E."/>
            <person name="Steffen D."/>
            <person name="Sanders M."/>
            <person name="Ma J."/>
            <person name="Kohara Y."/>
            <person name="Sharp S."/>
            <person name="Simmonds M.N."/>
            <person name="Spiegler S."/>
            <person name="Tivey A."/>
            <person name="Sugano S."/>
            <person name="White B."/>
            <person name="Walker D."/>
            <person name="Woodward J.R."/>
            <person name="Winckler T."/>
            <person name="Tanaka Y."/>
            <person name="Shaulsky G."/>
            <person name="Schleicher M."/>
            <person name="Weinstock G.M."/>
            <person name="Rosenthal A."/>
            <person name="Cox E.C."/>
            <person name="Chisholm R.L."/>
            <person name="Gibbs R.A."/>
            <person name="Loomis W.F."/>
            <person name="Platzer M."/>
            <person name="Kay R.R."/>
            <person name="Williams J.G."/>
            <person name="Dear P.H."/>
            <person name="Noegel A.A."/>
            <person name="Barrell B.G."/>
            <person name="Kuspa A."/>
        </authorList>
    </citation>
    <scope>NUCLEOTIDE SEQUENCE [LARGE SCALE GENOMIC DNA]</scope>
    <source>
        <strain>AX4</strain>
    </source>
</reference>
<keyword id="KW-0325">Glycoprotein</keyword>
<keyword id="KW-1185">Reference proteome</keyword>
<keyword id="KW-0964">Secreted</keyword>
<keyword id="KW-0732">Signal</keyword>
<protein>
    <recommendedName>
        <fullName>UPF0522 protein A</fullName>
    </recommendedName>
</protein>
<organism>
    <name type="scientific">Dictyostelium discoideum</name>
    <name type="common">Social amoeba</name>
    <dbReference type="NCBI Taxonomy" id="44689"/>
    <lineage>
        <taxon>Eukaryota</taxon>
        <taxon>Amoebozoa</taxon>
        <taxon>Evosea</taxon>
        <taxon>Eumycetozoa</taxon>
        <taxon>Dictyostelia</taxon>
        <taxon>Dictyosteliales</taxon>
        <taxon>Dictyosteliaceae</taxon>
        <taxon>Dictyostelium</taxon>
    </lineage>
</organism>
<dbReference type="EMBL" id="AAFI02000109">
    <property type="protein sequence ID" value="EAL63392.1"/>
    <property type="molecule type" value="Genomic_DNA"/>
</dbReference>
<dbReference type="RefSeq" id="XP_636902.1">
    <property type="nucleotide sequence ID" value="XM_631810.1"/>
</dbReference>
<dbReference type="SMR" id="Q54JE8"/>
<dbReference type="FunCoup" id="Q54JE8">
    <property type="interactions" value="2"/>
</dbReference>
<dbReference type="GlyGen" id="Q54JE8">
    <property type="glycosylation" value="6 sites"/>
</dbReference>
<dbReference type="PaxDb" id="44689-DDB0187781"/>
<dbReference type="ABCD" id="Q54JE8">
    <property type="antibodies" value="4 sequenced antibodies"/>
</dbReference>
<dbReference type="EnsemblProtists" id="EAL63392">
    <property type="protein sequence ID" value="EAL63392"/>
    <property type="gene ID" value="DDB_G0288095"/>
</dbReference>
<dbReference type="GeneID" id="8626457"/>
<dbReference type="KEGG" id="ddi:DDB_G0288095"/>
<dbReference type="dictyBase" id="DDB_G0288095">
    <property type="gene designation" value="bpiA"/>
</dbReference>
<dbReference type="VEuPathDB" id="AmoebaDB:DDB_G0288095"/>
<dbReference type="eggNOG" id="ENOG502SSE2">
    <property type="taxonomic scope" value="Eukaryota"/>
</dbReference>
<dbReference type="HOGENOM" id="CLU_542317_0_0_1"/>
<dbReference type="InParanoid" id="Q54JE8"/>
<dbReference type="OMA" id="QWNYHIC"/>
<dbReference type="PhylomeDB" id="Q54JE8"/>
<dbReference type="Reactome" id="R-DDI-166016">
    <property type="pathway name" value="Toll Like Receptor 4 (TLR4) Cascade"/>
</dbReference>
<dbReference type="Reactome" id="R-DDI-5686938">
    <property type="pathway name" value="Regulation of TLR by endogenous ligand"/>
</dbReference>
<dbReference type="PRO" id="PR:Q54JE8"/>
<dbReference type="Proteomes" id="UP000002195">
    <property type="component" value="Chromosome 5"/>
</dbReference>
<dbReference type="GO" id="GO:0005576">
    <property type="term" value="C:extracellular region"/>
    <property type="evidence" value="ECO:0007669"/>
    <property type="project" value="UniProtKB-SubCell"/>
</dbReference>
<dbReference type="GO" id="GO:0008289">
    <property type="term" value="F:lipid binding"/>
    <property type="evidence" value="ECO:0007669"/>
    <property type="project" value="InterPro"/>
</dbReference>
<dbReference type="Gene3D" id="3.15.10.10">
    <property type="entry name" value="Bactericidal permeability-increasing protein, domain 1"/>
    <property type="match status" value="1"/>
</dbReference>
<dbReference type="Gene3D" id="3.15.20.10">
    <property type="entry name" value="Bactericidal permeability-increasing protein, domain 2"/>
    <property type="match status" value="1"/>
</dbReference>
<dbReference type="InterPro" id="IPR017943">
    <property type="entry name" value="Bactericidal_perm-incr_a/b_dom"/>
</dbReference>
<dbReference type="InterPro" id="IPR032942">
    <property type="entry name" value="BPI/LBP/Plunc"/>
</dbReference>
<dbReference type="PANTHER" id="PTHR10504">
    <property type="entry name" value="BACTERICIDAL PERMEABILITY-INCREASING BPI PROTEIN-RELATED"/>
    <property type="match status" value="1"/>
</dbReference>
<dbReference type="PANTHER" id="PTHR10504:SF142">
    <property type="entry name" value="UPF0522 PROTEIN A-RELATED"/>
    <property type="match status" value="1"/>
</dbReference>
<dbReference type="SUPFAM" id="SSF55394">
    <property type="entry name" value="Bactericidal permeability-increasing protein, BPI"/>
    <property type="match status" value="1"/>
</dbReference>
<proteinExistence type="inferred from homology"/>
<sequence length="506" mass="54184">MIKSLLLLISIIIGIVISQEGAYPPAGIYVGLSSNFLTTEGESLTTYAQNELLSMSLPDQSGSSSKASYTFTSFKLGLTLDNIFYNQLQTDVYQIGWETISFELQWNYHICANAIFNPCENGNIQVGTVSGASAAVASNVYVEFNSTSTSIIATNTTMAFDQGAVQVNVHCSNAICVIPVSDIANEVAQNFVTELTNGITKAINEQVPTIEALFTPIKQIPMTLSNGDSFWINLEGTLVEESNPTADLPTITAALNGGVILENTDGNFVYPSQIPSYIPTDSQLESFTSDYSIVVTGFFIESLFDAVFASALPMTINPSQVPSASPVQLNTSDGFFSGVAPGLSQYPNLGIQVNCYSPVTPLVSINSSAISLFNLELSADFIILNGDNPFTAFTVLFTIDASLSTEILTDSPSTFSLNSTLASMTPNATIVTSTIGSVDATGFVQLMQMVQGVIKLPSPAYSVPSKYSMSNVELQLGTQVIQITFDLIDSSLLEKQKIIKKSINFN</sequence>
<name>U522A_DICDI</name>
<feature type="signal peptide" evidence="1">
    <location>
        <begin position="1"/>
        <end position="18"/>
    </location>
</feature>
<feature type="chain" id="PRO_0000319963" description="UPF0522 protein A">
    <location>
        <begin position="19"/>
        <end position="506"/>
    </location>
</feature>
<feature type="glycosylation site" description="N-linked (GlcNAc...) asparagine" evidence="1">
    <location>
        <position position="145"/>
    </location>
</feature>
<feature type="glycosylation site" description="N-linked (GlcNAc...) asparagine" evidence="1">
    <location>
        <position position="155"/>
    </location>
</feature>
<feature type="glycosylation site" description="N-linked (GlcNAc...) asparagine" evidence="1">
    <location>
        <position position="330"/>
    </location>
</feature>
<feature type="glycosylation site" description="N-linked (GlcNAc...) asparagine" evidence="1">
    <location>
        <position position="366"/>
    </location>
</feature>
<feature type="glycosylation site" description="N-linked (GlcNAc...) asparagine" evidence="1">
    <location>
        <position position="418"/>
    </location>
</feature>
<feature type="glycosylation site" description="N-linked (GlcNAc...) asparagine" evidence="1">
    <location>
        <position position="427"/>
    </location>
</feature>
<comment type="subcellular location">
    <subcellularLocation>
        <location evidence="2">Secreted</location>
    </subcellularLocation>
</comment>
<comment type="similarity">
    <text evidence="2">Belongs to the UPF0522 family.</text>
</comment>
<accession>Q54JE8</accession>
<gene>
    <name type="ORF">DDB_G0288095</name>
</gene>
<evidence type="ECO:0000255" key="1"/>
<evidence type="ECO:0000305" key="2"/>